<sequence>MLQPKRTKYRKMHKGRNDGLAWSGNAVSFGEYGLKATAHGQLTARQIEAARRTISRHVKKGGKMWIRVFPDKPITKKPIEVRMGSGKGNVEYWVAQIQPGRMIYEIEGIPEDIAREAFRLAAAKLSVTTTFVTRTVR</sequence>
<comment type="function">
    <text evidence="1">Binds 23S rRNA and is also seen to make contacts with the A and possibly P site tRNAs.</text>
</comment>
<comment type="subunit">
    <text evidence="1">Part of the 50S ribosomal subunit.</text>
</comment>
<comment type="similarity">
    <text evidence="1">Belongs to the universal ribosomal protein uL16 family.</text>
</comment>
<reference key="1">
    <citation type="journal article" date="2005" name="Genome Res.">
        <title>Comparative and functional genomic analyses of the pathogenicity of phytopathogen Xanthomonas campestris pv. campestris.</title>
        <authorList>
            <person name="Qian W."/>
            <person name="Jia Y."/>
            <person name="Ren S.-X."/>
            <person name="He Y.-Q."/>
            <person name="Feng J.-X."/>
            <person name="Lu L.-F."/>
            <person name="Sun Q."/>
            <person name="Ying G."/>
            <person name="Tang D.-J."/>
            <person name="Tang H."/>
            <person name="Wu W."/>
            <person name="Hao P."/>
            <person name="Wang L."/>
            <person name="Jiang B.-L."/>
            <person name="Zeng S."/>
            <person name="Gu W.-Y."/>
            <person name="Lu G."/>
            <person name="Rong L."/>
            <person name="Tian Y."/>
            <person name="Yao Z."/>
            <person name="Fu G."/>
            <person name="Chen B."/>
            <person name="Fang R."/>
            <person name="Qiang B."/>
            <person name="Chen Z."/>
            <person name="Zhao G.-P."/>
            <person name="Tang J.-L."/>
            <person name="He C."/>
        </authorList>
    </citation>
    <scope>NUCLEOTIDE SEQUENCE [LARGE SCALE GENOMIC DNA]</scope>
    <source>
        <strain>8004</strain>
    </source>
</reference>
<keyword id="KW-0687">Ribonucleoprotein</keyword>
<keyword id="KW-0689">Ribosomal protein</keyword>
<keyword id="KW-0694">RNA-binding</keyword>
<keyword id="KW-0699">rRNA-binding</keyword>
<keyword id="KW-0820">tRNA-binding</keyword>
<organism>
    <name type="scientific">Xanthomonas campestris pv. campestris (strain 8004)</name>
    <dbReference type="NCBI Taxonomy" id="314565"/>
    <lineage>
        <taxon>Bacteria</taxon>
        <taxon>Pseudomonadati</taxon>
        <taxon>Pseudomonadota</taxon>
        <taxon>Gammaproteobacteria</taxon>
        <taxon>Lysobacterales</taxon>
        <taxon>Lysobacteraceae</taxon>
        <taxon>Xanthomonas</taxon>
    </lineage>
</organism>
<proteinExistence type="inferred from homology"/>
<gene>
    <name evidence="1" type="primary">rplP</name>
    <name type="ordered locus">XC_3333</name>
</gene>
<accession>Q4URE6</accession>
<evidence type="ECO:0000255" key="1">
    <source>
        <dbReference type="HAMAP-Rule" id="MF_01342"/>
    </source>
</evidence>
<evidence type="ECO:0000305" key="2"/>
<name>RL16_XANC8</name>
<dbReference type="EMBL" id="CP000050">
    <property type="protein sequence ID" value="AAY50377.1"/>
    <property type="molecule type" value="Genomic_DNA"/>
</dbReference>
<dbReference type="RefSeq" id="WP_011036127.1">
    <property type="nucleotide sequence ID" value="NZ_CP155948.1"/>
</dbReference>
<dbReference type="SMR" id="Q4URE6"/>
<dbReference type="GeneID" id="79388299"/>
<dbReference type="KEGG" id="xcb:XC_3333"/>
<dbReference type="HOGENOM" id="CLU_078858_2_1_6"/>
<dbReference type="Proteomes" id="UP000000420">
    <property type="component" value="Chromosome"/>
</dbReference>
<dbReference type="GO" id="GO:0022625">
    <property type="term" value="C:cytosolic large ribosomal subunit"/>
    <property type="evidence" value="ECO:0007669"/>
    <property type="project" value="TreeGrafter"/>
</dbReference>
<dbReference type="GO" id="GO:0019843">
    <property type="term" value="F:rRNA binding"/>
    <property type="evidence" value="ECO:0007669"/>
    <property type="project" value="UniProtKB-UniRule"/>
</dbReference>
<dbReference type="GO" id="GO:0003735">
    <property type="term" value="F:structural constituent of ribosome"/>
    <property type="evidence" value="ECO:0007669"/>
    <property type="project" value="InterPro"/>
</dbReference>
<dbReference type="GO" id="GO:0000049">
    <property type="term" value="F:tRNA binding"/>
    <property type="evidence" value="ECO:0007669"/>
    <property type="project" value="UniProtKB-KW"/>
</dbReference>
<dbReference type="GO" id="GO:0006412">
    <property type="term" value="P:translation"/>
    <property type="evidence" value="ECO:0007669"/>
    <property type="project" value="UniProtKB-UniRule"/>
</dbReference>
<dbReference type="CDD" id="cd01433">
    <property type="entry name" value="Ribosomal_L16_L10e"/>
    <property type="match status" value="1"/>
</dbReference>
<dbReference type="FunFam" id="3.90.1170.10:FF:000001">
    <property type="entry name" value="50S ribosomal protein L16"/>
    <property type="match status" value="1"/>
</dbReference>
<dbReference type="Gene3D" id="3.90.1170.10">
    <property type="entry name" value="Ribosomal protein L10e/L16"/>
    <property type="match status" value="1"/>
</dbReference>
<dbReference type="HAMAP" id="MF_01342">
    <property type="entry name" value="Ribosomal_uL16"/>
    <property type="match status" value="1"/>
</dbReference>
<dbReference type="InterPro" id="IPR047873">
    <property type="entry name" value="Ribosomal_uL16"/>
</dbReference>
<dbReference type="InterPro" id="IPR000114">
    <property type="entry name" value="Ribosomal_uL16_bact-type"/>
</dbReference>
<dbReference type="InterPro" id="IPR020798">
    <property type="entry name" value="Ribosomal_uL16_CS"/>
</dbReference>
<dbReference type="InterPro" id="IPR016180">
    <property type="entry name" value="Ribosomal_uL16_dom"/>
</dbReference>
<dbReference type="InterPro" id="IPR036920">
    <property type="entry name" value="Ribosomal_uL16_sf"/>
</dbReference>
<dbReference type="NCBIfam" id="TIGR01164">
    <property type="entry name" value="rplP_bact"/>
    <property type="match status" value="1"/>
</dbReference>
<dbReference type="PANTHER" id="PTHR12220">
    <property type="entry name" value="50S/60S RIBOSOMAL PROTEIN L16"/>
    <property type="match status" value="1"/>
</dbReference>
<dbReference type="PANTHER" id="PTHR12220:SF13">
    <property type="entry name" value="LARGE RIBOSOMAL SUBUNIT PROTEIN UL16M"/>
    <property type="match status" value="1"/>
</dbReference>
<dbReference type="Pfam" id="PF00252">
    <property type="entry name" value="Ribosomal_L16"/>
    <property type="match status" value="1"/>
</dbReference>
<dbReference type="PRINTS" id="PR00060">
    <property type="entry name" value="RIBOSOMALL16"/>
</dbReference>
<dbReference type="SUPFAM" id="SSF54686">
    <property type="entry name" value="Ribosomal protein L16p/L10e"/>
    <property type="match status" value="1"/>
</dbReference>
<dbReference type="PROSITE" id="PS00586">
    <property type="entry name" value="RIBOSOMAL_L16_1"/>
    <property type="match status" value="1"/>
</dbReference>
<dbReference type="PROSITE" id="PS00701">
    <property type="entry name" value="RIBOSOMAL_L16_2"/>
    <property type="match status" value="1"/>
</dbReference>
<protein>
    <recommendedName>
        <fullName evidence="1">Large ribosomal subunit protein uL16</fullName>
    </recommendedName>
    <alternativeName>
        <fullName evidence="2">50S ribosomal protein L16</fullName>
    </alternativeName>
</protein>
<feature type="chain" id="PRO_0000062255" description="Large ribosomal subunit protein uL16">
    <location>
        <begin position="1"/>
        <end position="137"/>
    </location>
</feature>